<feature type="chain" id="PRO_0000157522" description="Large ribosomal subunit protein bL12">
    <location>
        <begin position="1"/>
        <end position="37" status="greater than"/>
    </location>
</feature>
<feature type="sequence conflict" description="In Ref. 2; AA sequence." evidence="2" ref="2">
    <original>Q</original>
    <variation>E</variation>
    <location>
        <position position="5"/>
    </location>
</feature>
<feature type="non-terminal residue">
    <location>
        <position position="37"/>
    </location>
</feature>
<reference key="1">
    <citation type="journal article" date="1979" name="Can. J. Biochem.">
        <title>Structural homologies in alanine-rich acidic ribosomal proteins from procaryotes and eucaryotes.</title>
        <authorList>
            <person name="Visentin L.P."/>
            <person name="Yaguchi M."/>
            <person name="Matheson A.T."/>
        </authorList>
    </citation>
    <scope>PROTEIN SEQUENCE</scope>
</reference>
<reference key="2">
    <citation type="journal article" date="1998" name="Electrophoresis">
        <title>Two-dimensional gel electrophoresis separation and N-terminal sequence analysis of proteins from Clostridium pasteurianum W5.</title>
        <authorList>
            <person name="Flengsrud R."/>
            <person name="Skjeldal L."/>
        </authorList>
    </citation>
    <scope>PROTEIN SEQUENCE OF 1-14</scope>
    <source>
        <strain>ATCC 6013 / DSM 525 / NCIB 9486 / VKM B-1774 / W5</strain>
    </source>
</reference>
<gene>
    <name type="primary">rplL</name>
</gene>
<comment type="function">
    <text evidence="1">Forms part of the ribosomal stalk which helps the ribosome interact with GTP-bound translation factors. Is thus essential for accurate translation (By similarity).</text>
</comment>
<comment type="subunit">
    <text evidence="1">Homodimer. Part of the ribosomal stalk of the 50S ribosomal subunit. Forms a multimeric L10(L12)X complex, where L10 forms an elongated spine to which 2 to 4 L12 dimers bind in a sequential fashion. Binds GTP-bound translation factors (By similarity).</text>
</comment>
<comment type="similarity">
    <text evidence="2">Belongs to the bacterial ribosomal protein bL12 family.</text>
</comment>
<protein>
    <recommendedName>
        <fullName evidence="2">Large ribosomal subunit protein bL12</fullName>
    </recommendedName>
    <alternativeName>
        <fullName>50S ribosomal protein L7/L12</fullName>
    </alternativeName>
    <alternativeName>
        <fullName>CP 30</fullName>
    </alternativeName>
</protein>
<proteinExistence type="evidence at protein level"/>
<accession>P05393</accession>
<organism>
    <name type="scientific">Clostridium pasteurianum</name>
    <dbReference type="NCBI Taxonomy" id="1501"/>
    <lineage>
        <taxon>Bacteria</taxon>
        <taxon>Bacillati</taxon>
        <taxon>Bacillota</taxon>
        <taxon>Clostridia</taxon>
        <taxon>Eubacteriales</taxon>
        <taxon>Clostridiaceae</taxon>
        <taxon>Clostridium</taxon>
    </lineage>
</organism>
<keyword id="KW-0903">Direct protein sequencing</keyword>
<keyword id="KW-0687">Ribonucleoprotein</keyword>
<keyword id="KW-0689">Ribosomal protein</keyword>
<name>RL7_CLOPA</name>
<sequence length="37" mass="4004">MSKEQIIQAIKGMTVLELNELVKSIEEEFGVSAAAPV</sequence>
<evidence type="ECO:0000250" key="1"/>
<evidence type="ECO:0000305" key="2"/>
<dbReference type="PIR" id="S11202">
    <property type="entry name" value="S11202"/>
</dbReference>
<dbReference type="SMR" id="P05393"/>
<dbReference type="GO" id="GO:1990904">
    <property type="term" value="C:ribonucleoprotein complex"/>
    <property type="evidence" value="ECO:0007669"/>
    <property type="project" value="UniProtKB-KW"/>
</dbReference>
<dbReference type="GO" id="GO:0005840">
    <property type="term" value="C:ribosome"/>
    <property type="evidence" value="ECO:0007669"/>
    <property type="project" value="UniProtKB-KW"/>
</dbReference>
<dbReference type="GO" id="GO:0003735">
    <property type="term" value="F:structural constituent of ribosome"/>
    <property type="evidence" value="ECO:0007669"/>
    <property type="project" value="InterPro"/>
</dbReference>
<dbReference type="GO" id="GO:0006412">
    <property type="term" value="P:translation"/>
    <property type="evidence" value="ECO:0007669"/>
    <property type="project" value="InterPro"/>
</dbReference>
<dbReference type="Gene3D" id="1.20.5.710">
    <property type="entry name" value="Single helix bin"/>
    <property type="match status" value="1"/>
</dbReference>
<dbReference type="InterPro" id="IPR008932">
    <property type="entry name" value="Ribosomal_bL12_oligo"/>
</dbReference>
<dbReference type="InterPro" id="IPR036235">
    <property type="entry name" value="Ribosomal_bL12_oligo_N_sf"/>
</dbReference>
<dbReference type="Pfam" id="PF16320">
    <property type="entry name" value="Ribosomal_L12_N"/>
    <property type="match status" value="1"/>
</dbReference>
<dbReference type="SUPFAM" id="SSF48300">
    <property type="entry name" value="Ribosomal protein L7/12, oligomerisation (N-terminal) domain"/>
    <property type="match status" value="1"/>
</dbReference>